<keyword id="KW-1015">Disulfide bond</keyword>
<keyword id="KW-0528">Neurotoxin</keyword>
<keyword id="KW-0732">Signal</keyword>
<keyword id="KW-0800">Toxin</keyword>
<organism>
    <name type="scientific">Nematostella vectensis</name>
    <name type="common">Starlet sea anemone</name>
    <dbReference type="NCBI Taxonomy" id="45351"/>
    <lineage>
        <taxon>Eukaryota</taxon>
        <taxon>Metazoa</taxon>
        <taxon>Cnidaria</taxon>
        <taxon>Anthozoa</taxon>
        <taxon>Hexacorallia</taxon>
        <taxon>Actiniaria</taxon>
        <taxon>Edwardsiidae</taxon>
        <taxon>Nematostella</taxon>
    </lineage>
</organism>
<sequence length="91" mass="10259">MNSLLKVAVVCLVMLVACFVPRVILTDDADTEYNSDYLLPKRAGCKCADGRQETYYFMGCQGGWYRCSPHYVIGDCCKKFSGKYGTFAVRF</sequence>
<feature type="signal peptide" evidence="3">
    <location>
        <begin position="1"/>
        <end position="26"/>
    </location>
</feature>
<feature type="chain" id="PRO_0000453819" description="N.vectensis toxin 8" evidence="6">
    <location>
        <begin position="27"/>
        <end position="91"/>
    </location>
</feature>
<feature type="disulfide bond" evidence="2">
    <location>
        <begin position="45"/>
        <end position="76"/>
    </location>
</feature>
<feature type="disulfide bond" evidence="2">
    <location>
        <begin position="47"/>
        <end position="67"/>
    </location>
</feature>
<feature type="disulfide bond" evidence="2">
    <location>
        <begin position="60"/>
        <end position="77"/>
    </location>
</feature>
<dbReference type="SMR" id="P0DQR4"/>
<dbReference type="GO" id="GO:0090729">
    <property type="term" value="F:toxin activity"/>
    <property type="evidence" value="ECO:0007669"/>
    <property type="project" value="UniProtKB-KW"/>
</dbReference>
<dbReference type="SUPFAM" id="SSF57392">
    <property type="entry name" value="Defensin-like"/>
    <property type="match status" value="1"/>
</dbReference>
<protein>
    <recommendedName>
        <fullName evidence="6">N.vectensis toxin 8</fullName>
        <shortName evidence="5">Nv8</shortName>
    </recommendedName>
</protein>
<proteinExistence type="evidence at transcript level"/>
<reference key="1">
    <citation type="journal article" date="2019" name="Mol. Biol. Evol.">
        <title>The birth and death of toxins with distinct functions: a case study in the sea anemone Nematostella.</title>
        <authorList>
            <person name="Sachkova M.Y."/>
            <person name="Singer S.A."/>
            <person name="Macrander J."/>
            <person name="Reitzel A.M."/>
            <person name="Peigneur S."/>
            <person name="Tytgat J."/>
            <person name="Moran Y."/>
        </authorList>
    </citation>
    <scope>NUCLEOTIDE SEQUENCE [MRNA]</scope>
</reference>
<accession>P0DQR4</accession>
<comment type="function">
    <text evidence="1">Has toxic effects on zebrafish larvae. It causes contractile paralysis and twitching of the tail within 20 minutes, followed by death within 30 minutes. Does not show any toxicity when injected into arthropods (cherry shrimps or grass shrimps).</text>
</comment>
<comment type="tissue specificity">
    <text evidence="1">Expressed in ectodermal gland cells.</text>
</comment>
<comment type="developmental stage">
    <text evidence="4">No protein detected at any developmental stage, probably due to low expression levels (PubMed:31134275). At transcriptional level, is found in the larval stage (PubMed:31134275).</text>
</comment>
<comment type="miscellaneous">
    <text evidence="1">Negative results: does not show activity on all voltage-gated potassium and sodium channels.</text>
</comment>
<comment type="online information" name="National Center for Biotechnology Information (NCBI)">
    <link uri="https://www.ncbi.nlm.nih.gov/nucleotide/XR_004292627.1?report=genbank&amp;log$=nuclalign&amp;blast_rank=1&amp;RID=CTDEH2MX013&amp;from=477&amp;to=683"/>
</comment>
<name>NV8_NEMVE</name>
<evidence type="ECO:0000250" key="1">
    <source>
        <dbReference type="UniProtKB" id="A0A5J6KCM0"/>
    </source>
</evidence>
<evidence type="ECO:0000250" key="2">
    <source>
        <dbReference type="UniProtKB" id="P19651"/>
    </source>
</evidence>
<evidence type="ECO:0000255" key="3"/>
<evidence type="ECO:0000269" key="4">
    <source>
    </source>
</evidence>
<evidence type="ECO:0000303" key="5">
    <source>
    </source>
</evidence>
<evidence type="ECO:0000305" key="6"/>